<reference key="1">
    <citation type="submission" date="2003-01" db="EMBL/GenBank/DDBJ databases">
        <title>Characterization of a 22-kDa protein required for the degradation of Selenomonas ruminantium lysine decarboxylase.</title>
        <authorList>
            <person name="Yamaguchi Y."/>
            <person name="Takatsuka Y."/>
            <person name="Kamio Y."/>
        </authorList>
    </citation>
    <scope>NUCLEOTIDE SEQUENCE [GENOMIC DNA]</scope>
</reference>
<gene>
    <name evidence="1" type="primary">rplK</name>
</gene>
<sequence>MAKKVSKIVKLQVVAGKANPAPPVGPALGQAGVNIMGFCKEFNERTKDKAGLIIPVEITVFEDRSFTFITKTPPAAVLLKKAAKIEKASGEPNKNKVAKLPRAEAMKIAESKMEDLNAADIEAATRMIEGTARSMGIEIVD</sequence>
<protein>
    <recommendedName>
        <fullName evidence="1">Large ribosomal subunit protein uL11</fullName>
    </recommendedName>
    <alternativeName>
        <fullName evidence="2">50S ribosomal protein L11</fullName>
    </alternativeName>
</protein>
<keyword id="KW-0488">Methylation</keyword>
<keyword id="KW-0687">Ribonucleoprotein</keyword>
<keyword id="KW-0689">Ribosomal protein</keyword>
<keyword id="KW-0694">RNA-binding</keyword>
<keyword id="KW-0699">rRNA-binding</keyword>
<proteinExistence type="inferred from homology"/>
<evidence type="ECO:0000255" key="1">
    <source>
        <dbReference type="HAMAP-Rule" id="MF_00736"/>
    </source>
</evidence>
<evidence type="ECO:0000305" key="2"/>
<organism>
    <name type="scientific">Selenomonas ruminantium</name>
    <dbReference type="NCBI Taxonomy" id="971"/>
    <lineage>
        <taxon>Bacteria</taxon>
        <taxon>Bacillati</taxon>
        <taxon>Bacillota</taxon>
        <taxon>Negativicutes</taxon>
        <taxon>Selenomonadales</taxon>
        <taxon>Selenomonadaceae</taxon>
        <taxon>Selenomonas</taxon>
    </lineage>
</organism>
<comment type="function">
    <text evidence="1">Forms part of the ribosomal stalk which helps the ribosome interact with GTP-bound translation factors.</text>
</comment>
<comment type="subunit">
    <text evidence="1">Part of the ribosomal stalk of the 50S ribosomal subunit. Interacts with L10 and the large rRNA to form the base of the stalk. L10 forms an elongated spine to which L12 dimers bind in a sequential fashion forming a multimeric L10(L12)X complex.</text>
</comment>
<comment type="PTM">
    <text evidence="1">One or more lysine residues are methylated.</text>
</comment>
<comment type="similarity">
    <text evidence="1">Belongs to the universal ribosomal protein uL11 family.</text>
</comment>
<name>RL11_SELRU</name>
<accession>Q84IF5</accession>
<dbReference type="EMBL" id="AB100500">
    <property type="protein sequence ID" value="BAC57015.1"/>
    <property type="molecule type" value="Genomic_DNA"/>
</dbReference>
<dbReference type="RefSeq" id="WP_014423820.1">
    <property type="nucleotide sequence ID" value="NZ_FRBC01000042.1"/>
</dbReference>
<dbReference type="SMR" id="Q84IF5"/>
<dbReference type="STRING" id="971.SAMN02910356_02572"/>
<dbReference type="GeneID" id="61461419"/>
<dbReference type="eggNOG" id="COG0080">
    <property type="taxonomic scope" value="Bacteria"/>
</dbReference>
<dbReference type="OMA" id="CKQFNAK"/>
<dbReference type="OrthoDB" id="9802408at2"/>
<dbReference type="GO" id="GO:0022625">
    <property type="term" value="C:cytosolic large ribosomal subunit"/>
    <property type="evidence" value="ECO:0007669"/>
    <property type="project" value="TreeGrafter"/>
</dbReference>
<dbReference type="GO" id="GO:0070180">
    <property type="term" value="F:large ribosomal subunit rRNA binding"/>
    <property type="evidence" value="ECO:0007669"/>
    <property type="project" value="UniProtKB-UniRule"/>
</dbReference>
<dbReference type="GO" id="GO:0003735">
    <property type="term" value="F:structural constituent of ribosome"/>
    <property type="evidence" value="ECO:0007669"/>
    <property type="project" value="InterPro"/>
</dbReference>
<dbReference type="GO" id="GO:0006412">
    <property type="term" value="P:translation"/>
    <property type="evidence" value="ECO:0007669"/>
    <property type="project" value="UniProtKB-UniRule"/>
</dbReference>
<dbReference type="CDD" id="cd00349">
    <property type="entry name" value="Ribosomal_L11"/>
    <property type="match status" value="1"/>
</dbReference>
<dbReference type="FunFam" id="1.10.10.250:FF:000001">
    <property type="entry name" value="50S ribosomal protein L11"/>
    <property type="match status" value="1"/>
</dbReference>
<dbReference type="FunFam" id="3.30.1550.10:FF:000001">
    <property type="entry name" value="50S ribosomal protein L11"/>
    <property type="match status" value="1"/>
</dbReference>
<dbReference type="Gene3D" id="1.10.10.250">
    <property type="entry name" value="Ribosomal protein L11, C-terminal domain"/>
    <property type="match status" value="1"/>
</dbReference>
<dbReference type="Gene3D" id="3.30.1550.10">
    <property type="entry name" value="Ribosomal protein L11/L12, N-terminal domain"/>
    <property type="match status" value="1"/>
</dbReference>
<dbReference type="HAMAP" id="MF_00736">
    <property type="entry name" value="Ribosomal_uL11"/>
    <property type="match status" value="1"/>
</dbReference>
<dbReference type="InterPro" id="IPR000911">
    <property type="entry name" value="Ribosomal_uL11"/>
</dbReference>
<dbReference type="InterPro" id="IPR006519">
    <property type="entry name" value="Ribosomal_uL11_bac-typ"/>
</dbReference>
<dbReference type="InterPro" id="IPR020783">
    <property type="entry name" value="Ribosomal_uL11_C"/>
</dbReference>
<dbReference type="InterPro" id="IPR036769">
    <property type="entry name" value="Ribosomal_uL11_C_sf"/>
</dbReference>
<dbReference type="InterPro" id="IPR020785">
    <property type="entry name" value="Ribosomal_uL11_CS"/>
</dbReference>
<dbReference type="InterPro" id="IPR020784">
    <property type="entry name" value="Ribosomal_uL11_N"/>
</dbReference>
<dbReference type="InterPro" id="IPR036796">
    <property type="entry name" value="Ribosomal_uL11_N_sf"/>
</dbReference>
<dbReference type="NCBIfam" id="TIGR01632">
    <property type="entry name" value="L11_bact"/>
    <property type="match status" value="1"/>
</dbReference>
<dbReference type="PANTHER" id="PTHR11661">
    <property type="entry name" value="60S RIBOSOMAL PROTEIN L12"/>
    <property type="match status" value="1"/>
</dbReference>
<dbReference type="PANTHER" id="PTHR11661:SF1">
    <property type="entry name" value="LARGE RIBOSOMAL SUBUNIT PROTEIN UL11M"/>
    <property type="match status" value="1"/>
</dbReference>
<dbReference type="Pfam" id="PF00298">
    <property type="entry name" value="Ribosomal_L11"/>
    <property type="match status" value="1"/>
</dbReference>
<dbReference type="Pfam" id="PF03946">
    <property type="entry name" value="Ribosomal_L11_N"/>
    <property type="match status" value="1"/>
</dbReference>
<dbReference type="SMART" id="SM00649">
    <property type="entry name" value="RL11"/>
    <property type="match status" value="1"/>
</dbReference>
<dbReference type="SUPFAM" id="SSF54747">
    <property type="entry name" value="Ribosomal L11/L12e N-terminal domain"/>
    <property type="match status" value="1"/>
</dbReference>
<dbReference type="SUPFAM" id="SSF46906">
    <property type="entry name" value="Ribosomal protein L11, C-terminal domain"/>
    <property type="match status" value="1"/>
</dbReference>
<dbReference type="PROSITE" id="PS00359">
    <property type="entry name" value="RIBOSOMAL_L11"/>
    <property type="match status" value="1"/>
</dbReference>
<feature type="chain" id="PRO_0000104356" description="Large ribosomal subunit protein uL11">
    <location>
        <begin position="1"/>
        <end position="141"/>
    </location>
</feature>